<organism>
    <name type="scientific">Neisseria meningitidis serogroup A / serotype 4A (strain DSM 15465 / Z2491)</name>
    <dbReference type="NCBI Taxonomy" id="122587"/>
    <lineage>
        <taxon>Bacteria</taxon>
        <taxon>Pseudomonadati</taxon>
        <taxon>Pseudomonadota</taxon>
        <taxon>Betaproteobacteria</taxon>
        <taxon>Neisseriales</taxon>
        <taxon>Neisseriaceae</taxon>
        <taxon>Neisseria</taxon>
    </lineage>
</organism>
<reference key="1">
    <citation type="journal article" date="2000" name="Nature">
        <title>Complete DNA sequence of a serogroup A strain of Neisseria meningitidis Z2491.</title>
        <authorList>
            <person name="Parkhill J."/>
            <person name="Achtman M."/>
            <person name="James K.D."/>
            <person name="Bentley S.D."/>
            <person name="Churcher C.M."/>
            <person name="Klee S.R."/>
            <person name="Morelli G."/>
            <person name="Basham D."/>
            <person name="Brown D."/>
            <person name="Chillingworth T."/>
            <person name="Davies R.M."/>
            <person name="Davis P."/>
            <person name="Devlin K."/>
            <person name="Feltwell T."/>
            <person name="Hamlin N."/>
            <person name="Holroyd S."/>
            <person name="Jagels K."/>
            <person name="Leather S."/>
            <person name="Moule S."/>
            <person name="Mungall K.L."/>
            <person name="Quail M.A."/>
            <person name="Rajandream M.A."/>
            <person name="Rutherford K.M."/>
            <person name="Simmonds M."/>
            <person name="Skelton J."/>
            <person name="Whitehead S."/>
            <person name="Spratt B.G."/>
            <person name="Barrell B.G."/>
        </authorList>
    </citation>
    <scope>NUCLEOTIDE SEQUENCE [LARGE SCALE GENOMIC DNA]</scope>
    <source>
        <strain>DSM 15465 / Z2491</strain>
    </source>
</reference>
<name>RL22_NEIMA</name>
<evidence type="ECO:0000255" key="1">
    <source>
        <dbReference type="HAMAP-Rule" id="MF_01331"/>
    </source>
</evidence>
<evidence type="ECO:0000305" key="2"/>
<feature type="chain" id="PRO_0000125188" description="Large ribosomal subunit protein uL22">
    <location>
        <begin position="1"/>
        <end position="109"/>
    </location>
</feature>
<keyword id="KW-0687">Ribonucleoprotein</keyword>
<keyword id="KW-0689">Ribosomal protein</keyword>
<keyword id="KW-0694">RNA-binding</keyword>
<keyword id="KW-0699">rRNA-binding</keyword>
<comment type="function">
    <text evidence="1">This protein binds specifically to 23S rRNA; its binding is stimulated by other ribosomal proteins, e.g. L4, L17, and L20. It is important during the early stages of 50S assembly. It makes multiple contacts with different domains of the 23S rRNA in the assembled 50S subunit and ribosome (By similarity).</text>
</comment>
<comment type="function">
    <text evidence="1">The globular domain of the protein is located near the polypeptide exit tunnel on the outside of the subunit, while an extended beta-hairpin is found that lines the wall of the exit tunnel in the center of the 70S ribosome.</text>
</comment>
<comment type="subunit">
    <text evidence="1">Part of the 50S ribosomal subunit.</text>
</comment>
<comment type="similarity">
    <text evidence="1">Belongs to the universal ribosomal protein uL22 family.</text>
</comment>
<proteinExistence type="inferred from homology"/>
<protein>
    <recommendedName>
        <fullName evidence="1">Large ribosomal subunit protein uL22</fullName>
    </recommendedName>
    <alternativeName>
        <fullName evidence="2">50S ribosomal protein L22</fullName>
    </alternativeName>
</protein>
<sequence length="109" mass="11909">MRVNAQHKNARISAQKARLVADLIRGKDVAQALNILAFSPKKGAELIKKVLESAIANAEHNNGADIDELKVVTIFVDKGPSLKRFQARAKGRGNRIEKQTCHINVTVGN</sequence>
<gene>
    <name evidence="1" type="primary">rplV</name>
    <name type="ordered locus">NMA0124</name>
</gene>
<dbReference type="EMBL" id="AL157959">
    <property type="protein sequence ID" value="CAM07442.1"/>
    <property type="molecule type" value="Genomic_DNA"/>
</dbReference>
<dbReference type="PIR" id="E81231">
    <property type="entry name" value="E81231"/>
</dbReference>
<dbReference type="RefSeq" id="WP_002215424.1">
    <property type="nucleotide sequence ID" value="NC_003116.1"/>
</dbReference>
<dbReference type="SMR" id="Q9JRD8"/>
<dbReference type="EnsemblBacteria" id="CAM07442">
    <property type="protein sequence ID" value="CAM07442"/>
    <property type="gene ID" value="NMA0124"/>
</dbReference>
<dbReference type="GeneID" id="93387222"/>
<dbReference type="KEGG" id="nma:NMA0124"/>
<dbReference type="HOGENOM" id="CLU_083987_3_3_4"/>
<dbReference type="Proteomes" id="UP000000626">
    <property type="component" value="Chromosome"/>
</dbReference>
<dbReference type="GO" id="GO:0022625">
    <property type="term" value="C:cytosolic large ribosomal subunit"/>
    <property type="evidence" value="ECO:0007669"/>
    <property type="project" value="TreeGrafter"/>
</dbReference>
<dbReference type="GO" id="GO:0019843">
    <property type="term" value="F:rRNA binding"/>
    <property type="evidence" value="ECO:0007669"/>
    <property type="project" value="UniProtKB-UniRule"/>
</dbReference>
<dbReference type="GO" id="GO:0003735">
    <property type="term" value="F:structural constituent of ribosome"/>
    <property type="evidence" value="ECO:0007669"/>
    <property type="project" value="InterPro"/>
</dbReference>
<dbReference type="GO" id="GO:0006412">
    <property type="term" value="P:translation"/>
    <property type="evidence" value="ECO:0007669"/>
    <property type="project" value="UniProtKB-UniRule"/>
</dbReference>
<dbReference type="CDD" id="cd00336">
    <property type="entry name" value="Ribosomal_L22"/>
    <property type="match status" value="1"/>
</dbReference>
<dbReference type="FunFam" id="3.90.470.10:FF:000001">
    <property type="entry name" value="50S ribosomal protein L22"/>
    <property type="match status" value="1"/>
</dbReference>
<dbReference type="Gene3D" id="3.90.470.10">
    <property type="entry name" value="Ribosomal protein L22/L17"/>
    <property type="match status" value="1"/>
</dbReference>
<dbReference type="HAMAP" id="MF_01331_B">
    <property type="entry name" value="Ribosomal_uL22_B"/>
    <property type="match status" value="1"/>
</dbReference>
<dbReference type="InterPro" id="IPR001063">
    <property type="entry name" value="Ribosomal_uL22"/>
</dbReference>
<dbReference type="InterPro" id="IPR005727">
    <property type="entry name" value="Ribosomal_uL22_bac/chlpt-type"/>
</dbReference>
<dbReference type="InterPro" id="IPR047867">
    <property type="entry name" value="Ribosomal_uL22_bac/org-type"/>
</dbReference>
<dbReference type="InterPro" id="IPR018260">
    <property type="entry name" value="Ribosomal_uL22_CS"/>
</dbReference>
<dbReference type="InterPro" id="IPR036394">
    <property type="entry name" value="Ribosomal_uL22_sf"/>
</dbReference>
<dbReference type="NCBIfam" id="TIGR01044">
    <property type="entry name" value="rplV_bact"/>
    <property type="match status" value="1"/>
</dbReference>
<dbReference type="PANTHER" id="PTHR13501">
    <property type="entry name" value="CHLOROPLAST 50S RIBOSOMAL PROTEIN L22-RELATED"/>
    <property type="match status" value="1"/>
</dbReference>
<dbReference type="PANTHER" id="PTHR13501:SF8">
    <property type="entry name" value="LARGE RIBOSOMAL SUBUNIT PROTEIN UL22M"/>
    <property type="match status" value="1"/>
</dbReference>
<dbReference type="Pfam" id="PF00237">
    <property type="entry name" value="Ribosomal_L22"/>
    <property type="match status" value="1"/>
</dbReference>
<dbReference type="SUPFAM" id="SSF54843">
    <property type="entry name" value="Ribosomal protein L22"/>
    <property type="match status" value="1"/>
</dbReference>
<dbReference type="PROSITE" id="PS00464">
    <property type="entry name" value="RIBOSOMAL_L22"/>
    <property type="match status" value="1"/>
</dbReference>
<accession>Q9JRD8</accession>
<accession>A1INY5</accession>